<protein>
    <recommendedName>
        <fullName evidence="5">Subtilisin-like protease SBT3.5</fullName>
        <ecNumber evidence="7">3.4.21.-</ecNumber>
    </recommendedName>
    <alternativeName>
        <fullName evidence="5">Subtilase subfamily 3 member 5</fullName>
        <shortName evidence="5">AtSBT3.5</shortName>
    </alternativeName>
</protein>
<name>SBT35_ARATH</name>
<keyword id="KW-0134">Cell wall</keyword>
<keyword id="KW-0325">Glycoprotein</keyword>
<keyword id="KW-0341">Growth regulation</keyword>
<keyword id="KW-0378">Hydrolase</keyword>
<keyword id="KW-0645">Protease</keyword>
<keyword id="KW-1185">Reference proteome</keyword>
<keyword id="KW-0964">Secreted</keyword>
<keyword id="KW-0720">Serine protease</keyword>
<keyword id="KW-0732">Signal</keyword>
<keyword id="KW-0865">Zymogen</keyword>
<proteinExistence type="evidence at protein level"/>
<organism>
    <name type="scientific">Arabidopsis thaliana</name>
    <name type="common">Mouse-ear cress</name>
    <dbReference type="NCBI Taxonomy" id="3702"/>
    <lineage>
        <taxon>Eukaryota</taxon>
        <taxon>Viridiplantae</taxon>
        <taxon>Streptophyta</taxon>
        <taxon>Embryophyta</taxon>
        <taxon>Tracheophyta</taxon>
        <taxon>Spermatophyta</taxon>
        <taxon>Magnoliopsida</taxon>
        <taxon>eudicotyledons</taxon>
        <taxon>Gunneridae</taxon>
        <taxon>Pentapetalae</taxon>
        <taxon>rosids</taxon>
        <taxon>malvids</taxon>
        <taxon>Brassicales</taxon>
        <taxon>Brassicaceae</taxon>
        <taxon>Camelineae</taxon>
        <taxon>Arabidopsis</taxon>
    </lineage>
</organism>
<dbReference type="EC" id="3.4.21.-" evidence="7"/>
<dbReference type="EMBL" id="AC006424">
    <property type="protein sequence ID" value="AAF31278.1"/>
    <property type="molecule type" value="Genomic_DNA"/>
</dbReference>
<dbReference type="EMBL" id="CP002684">
    <property type="protein sequence ID" value="AEE31542.1"/>
    <property type="molecule type" value="Genomic_DNA"/>
</dbReference>
<dbReference type="EMBL" id="AY074326">
    <property type="protein sequence ID" value="AAL67022.1"/>
    <property type="molecule type" value="mRNA"/>
</dbReference>
<dbReference type="EMBL" id="BT006147">
    <property type="protein sequence ID" value="AAP04132.1"/>
    <property type="molecule type" value="mRNA"/>
</dbReference>
<dbReference type="PIR" id="A86454">
    <property type="entry name" value="A86454"/>
</dbReference>
<dbReference type="RefSeq" id="NP_564412.1">
    <property type="nucleotide sequence ID" value="NM_103027.3"/>
</dbReference>
<dbReference type="SMR" id="Q9MAP7"/>
<dbReference type="FunCoup" id="Q9MAP7">
    <property type="interactions" value="8"/>
</dbReference>
<dbReference type="STRING" id="3702.Q9MAP7"/>
<dbReference type="MEROPS" id="S08.A36"/>
<dbReference type="GlyCosmos" id="Q9MAP7">
    <property type="glycosylation" value="10 sites, No reported glycans"/>
</dbReference>
<dbReference type="GlyGen" id="Q9MAP7">
    <property type="glycosylation" value="10 sites"/>
</dbReference>
<dbReference type="iPTMnet" id="Q9MAP7"/>
<dbReference type="PaxDb" id="3702-AT1G32940.1"/>
<dbReference type="ProteomicsDB" id="232958"/>
<dbReference type="EnsemblPlants" id="AT1G32940.1">
    <property type="protein sequence ID" value="AT1G32940.1"/>
    <property type="gene ID" value="AT1G32940"/>
</dbReference>
<dbReference type="GeneID" id="840188"/>
<dbReference type="Gramene" id="AT1G32940.1">
    <property type="protein sequence ID" value="AT1G32940.1"/>
    <property type="gene ID" value="AT1G32940"/>
</dbReference>
<dbReference type="KEGG" id="ath:AT1G32940"/>
<dbReference type="Araport" id="AT1G32940"/>
<dbReference type="TAIR" id="AT1G32940">
    <property type="gene designation" value="SBT3.5"/>
</dbReference>
<dbReference type="eggNOG" id="ENOG502QSF0">
    <property type="taxonomic scope" value="Eukaryota"/>
</dbReference>
<dbReference type="HOGENOM" id="CLU_000625_4_2_1"/>
<dbReference type="InParanoid" id="Q9MAP7"/>
<dbReference type="OrthoDB" id="206201at2759"/>
<dbReference type="PhylomeDB" id="Q9MAP7"/>
<dbReference type="PRO" id="PR:Q9MAP7"/>
<dbReference type="Proteomes" id="UP000006548">
    <property type="component" value="Chromosome 1"/>
</dbReference>
<dbReference type="ExpressionAtlas" id="Q9MAP7">
    <property type="expression patterns" value="baseline and differential"/>
</dbReference>
<dbReference type="GO" id="GO:0005576">
    <property type="term" value="C:extracellular region"/>
    <property type="evidence" value="ECO:0007669"/>
    <property type="project" value="UniProtKB-KW"/>
</dbReference>
<dbReference type="GO" id="GO:0009505">
    <property type="term" value="C:plant-type cell wall"/>
    <property type="evidence" value="ECO:0000314"/>
    <property type="project" value="UniProtKB"/>
</dbReference>
<dbReference type="GO" id="GO:0004252">
    <property type="term" value="F:serine-type endopeptidase activity"/>
    <property type="evidence" value="ECO:0000314"/>
    <property type="project" value="UniProtKB"/>
</dbReference>
<dbReference type="GO" id="GO:0006508">
    <property type="term" value="P:proteolysis"/>
    <property type="evidence" value="ECO:0007669"/>
    <property type="project" value="UniProtKB-KW"/>
</dbReference>
<dbReference type="CDD" id="cd02120">
    <property type="entry name" value="PA_subtilisin_like"/>
    <property type="match status" value="1"/>
</dbReference>
<dbReference type="CDD" id="cd04852">
    <property type="entry name" value="Peptidases_S8_3"/>
    <property type="match status" value="1"/>
</dbReference>
<dbReference type="FunFam" id="2.60.40.2310:FF:000001">
    <property type="entry name" value="Subtilisin-like protease SBT1.5"/>
    <property type="match status" value="1"/>
</dbReference>
<dbReference type="FunFam" id="3.40.50.200:FF:000006">
    <property type="entry name" value="Subtilisin-like protease SBT1.5"/>
    <property type="match status" value="1"/>
</dbReference>
<dbReference type="FunFam" id="3.50.30.30:FF:000005">
    <property type="entry name" value="subtilisin-like protease SBT1.5"/>
    <property type="match status" value="1"/>
</dbReference>
<dbReference type="FunFam" id="3.30.70.80:FF:000002">
    <property type="entry name" value="Subtilisin-like protease SBT5.3"/>
    <property type="match status" value="1"/>
</dbReference>
<dbReference type="Gene3D" id="2.60.40.2310">
    <property type="match status" value="1"/>
</dbReference>
<dbReference type="Gene3D" id="3.50.30.30">
    <property type="match status" value="1"/>
</dbReference>
<dbReference type="Gene3D" id="3.30.70.80">
    <property type="entry name" value="Peptidase S8 propeptide/proteinase inhibitor I9"/>
    <property type="match status" value="1"/>
</dbReference>
<dbReference type="Gene3D" id="3.40.50.200">
    <property type="entry name" value="Peptidase S8/S53 domain"/>
    <property type="match status" value="1"/>
</dbReference>
<dbReference type="InterPro" id="IPR003137">
    <property type="entry name" value="PA_domain"/>
</dbReference>
<dbReference type="InterPro" id="IPR000209">
    <property type="entry name" value="Peptidase_S8/S53_dom"/>
</dbReference>
<dbReference type="InterPro" id="IPR036852">
    <property type="entry name" value="Peptidase_S8/S53_dom_sf"/>
</dbReference>
<dbReference type="InterPro" id="IPR023828">
    <property type="entry name" value="Peptidase_S8_Ser-AS"/>
</dbReference>
<dbReference type="InterPro" id="IPR015500">
    <property type="entry name" value="Peptidase_S8_subtilisin-rel"/>
</dbReference>
<dbReference type="InterPro" id="IPR034197">
    <property type="entry name" value="Peptidases_S8_3"/>
</dbReference>
<dbReference type="InterPro" id="IPR010259">
    <property type="entry name" value="S8pro/Inhibitor_I9"/>
</dbReference>
<dbReference type="InterPro" id="IPR037045">
    <property type="entry name" value="S8pro/Inhibitor_I9_sf"/>
</dbReference>
<dbReference type="InterPro" id="IPR045051">
    <property type="entry name" value="SBT"/>
</dbReference>
<dbReference type="InterPro" id="IPR041469">
    <property type="entry name" value="Subtilisin-like_FN3"/>
</dbReference>
<dbReference type="PANTHER" id="PTHR10795">
    <property type="entry name" value="PROPROTEIN CONVERTASE SUBTILISIN/KEXIN"/>
    <property type="match status" value="1"/>
</dbReference>
<dbReference type="Pfam" id="PF17766">
    <property type="entry name" value="fn3_6"/>
    <property type="match status" value="1"/>
</dbReference>
<dbReference type="Pfam" id="PF05922">
    <property type="entry name" value="Inhibitor_I9"/>
    <property type="match status" value="1"/>
</dbReference>
<dbReference type="Pfam" id="PF02225">
    <property type="entry name" value="PA"/>
    <property type="match status" value="1"/>
</dbReference>
<dbReference type="Pfam" id="PF00082">
    <property type="entry name" value="Peptidase_S8"/>
    <property type="match status" value="1"/>
</dbReference>
<dbReference type="PRINTS" id="PR00723">
    <property type="entry name" value="SUBTILISIN"/>
</dbReference>
<dbReference type="SUPFAM" id="SSF52743">
    <property type="entry name" value="Subtilisin-like"/>
    <property type="match status" value="1"/>
</dbReference>
<dbReference type="PROSITE" id="PS51892">
    <property type="entry name" value="SUBTILASE"/>
    <property type="match status" value="1"/>
</dbReference>
<dbReference type="PROSITE" id="PS00138">
    <property type="entry name" value="SUBTILASE_SER"/>
    <property type="match status" value="1"/>
</dbReference>
<reference key="1">
    <citation type="journal article" date="2000" name="Nature">
        <title>Sequence and analysis of chromosome 1 of the plant Arabidopsis thaliana.</title>
        <authorList>
            <person name="Theologis A."/>
            <person name="Ecker J.R."/>
            <person name="Palm C.J."/>
            <person name="Federspiel N.A."/>
            <person name="Kaul S."/>
            <person name="White O."/>
            <person name="Alonso J."/>
            <person name="Altafi H."/>
            <person name="Araujo R."/>
            <person name="Bowman C.L."/>
            <person name="Brooks S.Y."/>
            <person name="Buehler E."/>
            <person name="Chan A."/>
            <person name="Chao Q."/>
            <person name="Chen H."/>
            <person name="Cheuk R.F."/>
            <person name="Chin C.W."/>
            <person name="Chung M.K."/>
            <person name="Conn L."/>
            <person name="Conway A.B."/>
            <person name="Conway A.R."/>
            <person name="Creasy T.H."/>
            <person name="Dewar K."/>
            <person name="Dunn P."/>
            <person name="Etgu P."/>
            <person name="Feldblyum T.V."/>
            <person name="Feng J.-D."/>
            <person name="Fong B."/>
            <person name="Fujii C.Y."/>
            <person name="Gill J.E."/>
            <person name="Goldsmith A.D."/>
            <person name="Haas B."/>
            <person name="Hansen N.F."/>
            <person name="Hughes B."/>
            <person name="Huizar L."/>
            <person name="Hunter J.L."/>
            <person name="Jenkins J."/>
            <person name="Johnson-Hopson C."/>
            <person name="Khan S."/>
            <person name="Khaykin E."/>
            <person name="Kim C.J."/>
            <person name="Koo H.L."/>
            <person name="Kremenetskaia I."/>
            <person name="Kurtz D.B."/>
            <person name="Kwan A."/>
            <person name="Lam B."/>
            <person name="Langin-Hooper S."/>
            <person name="Lee A."/>
            <person name="Lee J.M."/>
            <person name="Lenz C.A."/>
            <person name="Li J.H."/>
            <person name="Li Y.-P."/>
            <person name="Lin X."/>
            <person name="Liu S.X."/>
            <person name="Liu Z.A."/>
            <person name="Luros J.S."/>
            <person name="Maiti R."/>
            <person name="Marziali A."/>
            <person name="Militscher J."/>
            <person name="Miranda M."/>
            <person name="Nguyen M."/>
            <person name="Nierman W.C."/>
            <person name="Osborne B.I."/>
            <person name="Pai G."/>
            <person name="Peterson J."/>
            <person name="Pham P.K."/>
            <person name="Rizzo M."/>
            <person name="Rooney T."/>
            <person name="Rowley D."/>
            <person name="Sakano H."/>
            <person name="Salzberg S.L."/>
            <person name="Schwartz J.R."/>
            <person name="Shinn P."/>
            <person name="Southwick A.M."/>
            <person name="Sun H."/>
            <person name="Tallon L.J."/>
            <person name="Tambunga G."/>
            <person name="Toriumi M.J."/>
            <person name="Town C.D."/>
            <person name="Utterback T."/>
            <person name="Van Aken S."/>
            <person name="Vaysberg M."/>
            <person name="Vysotskaia V.S."/>
            <person name="Walker M."/>
            <person name="Wu D."/>
            <person name="Yu G."/>
            <person name="Fraser C.M."/>
            <person name="Venter J.C."/>
            <person name="Davis R.W."/>
        </authorList>
    </citation>
    <scope>NUCLEOTIDE SEQUENCE [LARGE SCALE GENOMIC DNA]</scope>
    <source>
        <strain>cv. Columbia</strain>
    </source>
</reference>
<reference key="2">
    <citation type="journal article" date="2017" name="Plant J.">
        <title>Araport11: a complete reannotation of the Arabidopsis thaliana reference genome.</title>
        <authorList>
            <person name="Cheng C.Y."/>
            <person name="Krishnakumar V."/>
            <person name="Chan A.P."/>
            <person name="Thibaud-Nissen F."/>
            <person name="Schobel S."/>
            <person name="Town C.D."/>
        </authorList>
    </citation>
    <scope>GENOME REANNOTATION</scope>
    <source>
        <strain>cv. Columbia</strain>
    </source>
</reference>
<reference key="3">
    <citation type="journal article" date="2003" name="Science">
        <title>Empirical analysis of transcriptional activity in the Arabidopsis genome.</title>
        <authorList>
            <person name="Yamada K."/>
            <person name="Lim J."/>
            <person name="Dale J.M."/>
            <person name="Chen H."/>
            <person name="Shinn P."/>
            <person name="Palm C.J."/>
            <person name="Southwick A.M."/>
            <person name="Wu H.C."/>
            <person name="Kim C.J."/>
            <person name="Nguyen M."/>
            <person name="Pham P.K."/>
            <person name="Cheuk R.F."/>
            <person name="Karlin-Newmann G."/>
            <person name="Liu S.X."/>
            <person name="Lam B."/>
            <person name="Sakano H."/>
            <person name="Wu T."/>
            <person name="Yu G."/>
            <person name="Miranda M."/>
            <person name="Quach H.L."/>
            <person name="Tripp M."/>
            <person name="Chang C.H."/>
            <person name="Lee J.M."/>
            <person name="Toriumi M.J."/>
            <person name="Chan M.M."/>
            <person name="Tang C.C."/>
            <person name="Onodera C.S."/>
            <person name="Deng J.M."/>
            <person name="Akiyama K."/>
            <person name="Ansari Y."/>
            <person name="Arakawa T."/>
            <person name="Banh J."/>
            <person name="Banno F."/>
            <person name="Bowser L."/>
            <person name="Brooks S.Y."/>
            <person name="Carninci P."/>
            <person name="Chao Q."/>
            <person name="Choy N."/>
            <person name="Enju A."/>
            <person name="Goldsmith A.D."/>
            <person name="Gurjal M."/>
            <person name="Hansen N.F."/>
            <person name="Hayashizaki Y."/>
            <person name="Johnson-Hopson C."/>
            <person name="Hsuan V.W."/>
            <person name="Iida K."/>
            <person name="Karnes M."/>
            <person name="Khan S."/>
            <person name="Koesema E."/>
            <person name="Ishida J."/>
            <person name="Jiang P.X."/>
            <person name="Jones T."/>
            <person name="Kawai J."/>
            <person name="Kamiya A."/>
            <person name="Meyers C."/>
            <person name="Nakajima M."/>
            <person name="Narusaka M."/>
            <person name="Seki M."/>
            <person name="Sakurai T."/>
            <person name="Satou M."/>
            <person name="Tamse R."/>
            <person name="Vaysberg M."/>
            <person name="Wallender E.K."/>
            <person name="Wong C."/>
            <person name="Yamamura Y."/>
            <person name="Yuan S."/>
            <person name="Shinozaki K."/>
            <person name="Davis R.W."/>
            <person name="Theologis A."/>
            <person name="Ecker J.R."/>
        </authorList>
    </citation>
    <scope>NUCLEOTIDE SEQUENCE [LARGE SCALE MRNA]</scope>
    <source>
        <strain>cv. Columbia</strain>
    </source>
</reference>
<reference key="4">
    <citation type="journal article" date="2005" name="PLoS Comput. Biol.">
        <title>Inferring hypotheses on functional relationships of genes: Analysis of the Arabidopsis thaliana subtilase gene family.</title>
        <authorList>
            <person name="Rautengarten C."/>
            <person name="Steinhauser D."/>
            <person name="Bussis D."/>
            <person name="Stintzi A."/>
            <person name="Schaller A."/>
            <person name="Kopka J."/>
            <person name="Altmann T."/>
        </authorList>
    </citation>
    <scope>GENE FAMILY</scope>
    <scope>NOMENCLATURE</scope>
</reference>
<reference key="5">
    <citation type="journal article" date="2014" name="Ann. Bot.">
        <title>Arabidopsis PECTIN METHYLESTERASE17 is co-expressed with and processed by SBT3.5, a subtilisin-like serine protease.</title>
        <authorList>
            <person name="Senechal F."/>
            <person name="Graff L."/>
            <person name="Surcouf O."/>
            <person name="Marcelo P."/>
            <person name="Rayon C."/>
            <person name="Bouton S."/>
            <person name="Mareck A."/>
            <person name="Mouille G."/>
            <person name="Stintzi A."/>
            <person name="Hoefte H."/>
            <person name="Lerouge P."/>
            <person name="Schaller A."/>
            <person name="Pelloux J."/>
        </authorList>
    </citation>
    <scope>IDENTIFICATION BY MASS SPECTROMETRY</scope>
    <scope>FUNCTION</scope>
    <scope>SUBCELLULAR LOCATION</scope>
    <scope>TISSUE SPECIFICITY</scope>
    <scope>DISRUPTION PHENOTYPE</scope>
</reference>
<sequence>MRNCRVLLVLVLSLVIVLNVVRASDESKVHIVYLGEKQHDDPEFVSESHHQMLSSLLGSKVDAHESMVYSYRHGFSGFAAKLTESQAKKLADSPEVVHVMADSFYELATTRTWDYLGLSVANPNNLLNDTNMGDQVIIGFIDTGVWPESESFNDNGVGPIPSHWKGGCESGEKFISTNCNRKLIGAKYFINGFLAENEGFNTTESRDYISARDFIGHGTHTASIAGGSFVPNISYKGLAGGNLRGGAPRARIAIYKACWYVDQLGAVACSSSDILKAMDESMHDGVDVLSLSLGAQIPLYPETDLRDRIATGAFHAVAKGIIVVCAGGNSGPAAQTVLNTAPWIITVAATTLDRSFPTPITLGNRKVILGQALYTGQELGFTSLVYPENAGFTNETFSGVCERLNLNPNRTMAGKVVLCFTTNTLFTAVSRAASYVKAAGGLGVIIARNPGYNLTPCRDDFPCVAIDYELGTDVLLYIRSTRSPVVKIQPSRTLVGQPVGTKVATFSSRGPNSISPAILKPDIGAPGVSILAATSPDSNSSVGGFDILAGTSMAAPVVAGVVALLKALHPNWSPAAFRSAIVTTAWRTDPFGEQIFAEGSSRKVADPFDYGGGIVNPEKAADPGLIYDMGPRDYILYLCSAGYNDSSITQLVGNVTVCSTPKTSVLDVNLPSITIPDLKDEVTLTRTVTNVGTVDSVYKVVVEPPLGIQVVVAPETLVFNSKTKNVSFTVRVSTTHKINTGFYFGNLIWTDSMHNVTIPVSVRTQILQNYYDEN</sequence>
<evidence type="ECO:0000255" key="1"/>
<evidence type="ECO:0000255" key="2">
    <source>
        <dbReference type="PROSITE-ProRule" id="PRU00498"/>
    </source>
</evidence>
<evidence type="ECO:0000255" key="3">
    <source>
        <dbReference type="PROSITE-ProRule" id="PRU01240"/>
    </source>
</evidence>
<evidence type="ECO:0000269" key="4">
    <source>
    </source>
</evidence>
<evidence type="ECO:0000303" key="5">
    <source>
    </source>
</evidence>
<evidence type="ECO:0000303" key="6">
    <source>
    </source>
</evidence>
<evidence type="ECO:0000305" key="7"/>
<evidence type="ECO:0000312" key="8">
    <source>
        <dbReference type="Araport" id="AT1G32940"/>
    </source>
</evidence>
<evidence type="ECO:0000312" key="9">
    <source>
        <dbReference type="EMBL" id="AAF31278.1"/>
    </source>
</evidence>
<comment type="function">
    <text evidence="4">Serine protease that cleaves the pectin methylesterase 17 (PME17) protein to release the PME17 mature form in the apoplasm.</text>
</comment>
<comment type="subcellular location">
    <subcellularLocation>
        <location evidence="4">Secreted</location>
        <location evidence="4">Cell wall</location>
    </subcellularLocation>
    <text evidence="4">Identified in cell-wall-enriched root protein extracts.</text>
</comment>
<comment type="tissue specificity">
    <text evidence="4">Expressed in roots, leaves, stems, flower buds, developing siliques and mature seeds.</text>
</comment>
<comment type="disruption phenotype">
    <text evidence="4">Transient delay during the first day of seed germination and increased length of the primary root.</text>
</comment>
<comment type="similarity">
    <text evidence="3">Belongs to the peptidase S8 family.</text>
</comment>
<accession>Q9MAP7</accession>
<feature type="signal peptide" evidence="1">
    <location>
        <begin position="1"/>
        <end position="23"/>
    </location>
</feature>
<feature type="propeptide" id="PRO_0000430829" description="Removed in mature form" evidence="6">
    <location>
        <begin position="24"/>
        <end position="108"/>
    </location>
</feature>
<feature type="chain" id="PRO_0000430830" description="Subtilisin-like protease SBT3.5" evidence="6">
    <location>
        <begin position="109"/>
        <end position="774"/>
    </location>
</feature>
<feature type="domain" description="Inhibitor I9" evidence="1">
    <location>
        <begin position="29"/>
        <end position="108"/>
    </location>
</feature>
<feature type="domain" description="Peptidase S8" evidence="3">
    <location>
        <begin position="112"/>
        <end position="621"/>
    </location>
</feature>
<feature type="domain" description="PA" evidence="1">
    <location>
        <begin position="383"/>
        <end position="478"/>
    </location>
</feature>
<feature type="active site" description="Charge relay system" evidence="3">
    <location>
        <position position="142"/>
    </location>
</feature>
<feature type="active site" description="Charge relay system" evidence="3">
    <location>
        <position position="217"/>
    </location>
</feature>
<feature type="active site" description="Charge relay system" evidence="3">
    <location>
        <position position="552"/>
    </location>
</feature>
<feature type="glycosylation site" description="N-linked (GlcNAc...) asparagine" evidence="2">
    <location>
        <position position="128"/>
    </location>
</feature>
<feature type="glycosylation site" description="N-linked (GlcNAc...) asparagine" evidence="2">
    <location>
        <position position="201"/>
    </location>
</feature>
<feature type="glycosylation site" description="N-linked (GlcNAc...) asparagine" evidence="2">
    <location>
        <position position="232"/>
    </location>
</feature>
<feature type="glycosylation site" description="N-linked (GlcNAc...) asparagine" evidence="2">
    <location>
        <position position="394"/>
    </location>
</feature>
<feature type="glycosylation site" description="N-linked (GlcNAc...) asparagine" evidence="2">
    <location>
        <position position="409"/>
    </location>
</feature>
<feature type="glycosylation site" description="N-linked (GlcNAc...) asparagine" evidence="2">
    <location>
        <position position="539"/>
    </location>
</feature>
<feature type="glycosylation site" description="N-linked (GlcNAc...) asparagine" evidence="2">
    <location>
        <position position="644"/>
    </location>
</feature>
<feature type="glycosylation site" description="N-linked (GlcNAc...) asparagine" evidence="2">
    <location>
        <position position="654"/>
    </location>
</feature>
<feature type="glycosylation site" description="N-linked (GlcNAc...) asparagine" evidence="2">
    <location>
        <position position="725"/>
    </location>
</feature>
<feature type="glycosylation site" description="N-linked (GlcNAc...) asparagine" evidence="2">
    <location>
        <position position="755"/>
    </location>
</feature>
<gene>
    <name evidence="5" type="primary">SBT3.5</name>
    <name evidence="8" type="ordered locus">At1g32940</name>
    <name evidence="9" type="ORF">F9L11.11</name>
</gene>